<gene>
    <name type="primary">LOL1</name>
    <name type="ordered locus">At1g32540</name>
    <name type="ORF">T9G5.1</name>
</gene>
<comment type="function">
    <text evidence="1">Positive regulator of reactive oxygen-induced cell death. May be involved in the repression of the copper/zinc superoxide dismutase CSD1 and CSD2 that detoxify accumulating superoxide before the reactive oxygen species (ROS) can trigger a cell death cascade. LSD1 and LOL1 have antagonistic effects on CSD1 and CSD2 accumulation to regulate oxidative stress-induced cell death.</text>
</comment>
<comment type="subcellular location">
    <subcellularLocation>
        <location evidence="3">Nucleus</location>
    </subcellularLocation>
</comment>
<comment type="alternative products">
    <event type="alternative splicing"/>
    <isoform>
        <id>Q93ZB1-1</id>
        <name>1</name>
        <sequence type="displayed"/>
    </isoform>
    <isoform>
        <id>Q93ZB1-2</id>
        <name>2</name>
        <sequence type="described" ref="VSP_041105"/>
    </isoform>
</comment>
<comment type="miscellaneous">
    <text>Over-expression of LOL1 induces cell death.</text>
</comment>
<comment type="sequence caution" evidence="3">
    <conflict type="erroneous gene model prediction">
        <sequence resource="EMBL-CDS" id="AAG51243"/>
    </conflict>
</comment>
<comment type="sequence caution" evidence="3">
    <conflict type="miscellaneous discrepancy">
        <sequence resource="EMBL" id="BX813858"/>
    </conflict>
    <text>Sequencing errors.</text>
</comment>
<feature type="chain" id="PRO_0000408484" description="Protein LOL1">
    <location>
        <begin position="1"/>
        <end position="154"/>
    </location>
</feature>
<feature type="region of interest" description="Putative zinc finger 1">
    <location>
        <begin position="34"/>
        <end position="64"/>
    </location>
</feature>
<feature type="region of interest" description="Putative zinc finger 2">
    <location>
        <begin position="73"/>
        <end position="103"/>
    </location>
</feature>
<feature type="region of interest" description="Putative zinc finger 3">
    <location>
        <begin position="111"/>
        <end position="141"/>
    </location>
</feature>
<feature type="splice variant" id="VSP_041105" description="In isoform 2." evidence="2">
    <original>MPVPLAPYPTPPAPALAPSYNTPPAN</original>
    <variation>MHTWKNQIFSDSQFVLLFMGKNCSIIFPEPHLFISHVFIIHLNVLFLVKKINKNNLRFV</variation>
    <location>
        <begin position="1"/>
        <end position="26"/>
    </location>
</feature>
<evidence type="ECO:0000269" key="1">
    <source>
    </source>
</evidence>
<evidence type="ECO:0000303" key="2">
    <source>
    </source>
</evidence>
<evidence type="ECO:0000305" key="3"/>
<accession>Q93ZB1</accession>
<accession>Q3ED39</accession>
<accession>Q9C7Y5</accession>
<organism>
    <name type="scientific">Arabidopsis thaliana</name>
    <name type="common">Mouse-ear cress</name>
    <dbReference type="NCBI Taxonomy" id="3702"/>
    <lineage>
        <taxon>Eukaryota</taxon>
        <taxon>Viridiplantae</taxon>
        <taxon>Streptophyta</taxon>
        <taxon>Embryophyta</taxon>
        <taxon>Tracheophyta</taxon>
        <taxon>Spermatophyta</taxon>
        <taxon>Magnoliopsida</taxon>
        <taxon>eudicotyledons</taxon>
        <taxon>Gunneridae</taxon>
        <taxon>Pentapetalae</taxon>
        <taxon>rosids</taxon>
        <taxon>malvids</taxon>
        <taxon>Brassicales</taxon>
        <taxon>Brassicaceae</taxon>
        <taxon>Camelineae</taxon>
        <taxon>Arabidopsis</taxon>
    </lineage>
</organism>
<reference key="1">
    <citation type="journal article" date="2003" name="Proc. Natl. Acad. Sci. U.S.A.">
        <title>Antagonistic control of oxidative stress-induced cell death in Arabidopsis by two related, plant-specific zinc finger proteins.</title>
        <authorList>
            <person name="Epple P."/>
            <person name="Mack A.A."/>
            <person name="Morris V.R."/>
            <person name="Dangl J.L."/>
        </authorList>
    </citation>
    <scope>NUCLEOTIDE SEQUENCE [MRNA] (ISOFORM 1)</scope>
    <scope>FUNCTION</scope>
    <source>
        <strain>cv. Columbia</strain>
    </source>
</reference>
<reference key="2">
    <citation type="journal article" date="2000" name="Nature">
        <title>Sequence and analysis of chromosome 1 of the plant Arabidopsis thaliana.</title>
        <authorList>
            <person name="Theologis A."/>
            <person name="Ecker J.R."/>
            <person name="Palm C.J."/>
            <person name="Federspiel N.A."/>
            <person name="Kaul S."/>
            <person name="White O."/>
            <person name="Alonso J."/>
            <person name="Altafi H."/>
            <person name="Araujo R."/>
            <person name="Bowman C.L."/>
            <person name="Brooks S.Y."/>
            <person name="Buehler E."/>
            <person name="Chan A."/>
            <person name="Chao Q."/>
            <person name="Chen H."/>
            <person name="Cheuk R.F."/>
            <person name="Chin C.W."/>
            <person name="Chung M.K."/>
            <person name="Conn L."/>
            <person name="Conway A.B."/>
            <person name="Conway A.R."/>
            <person name="Creasy T.H."/>
            <person name="Dewar K."/>
            <person name="Dunn P."/>
            <person name="Etgu P."/>
            <person name="Feldblyum T.V."/>
            <person name="Feng J.-D."/>
            <person name="Fong B."/>
            <person name="Fujii C.Y."/>
            <person name="Gill J.E."/>
            <person name="Goldsmith A.D."/>
            <person name="Haas B."/>
            <person name="Hansen N.F."/>
            <person name="Hughes B."/>
            <person name="Huizar L."/>
            <person name="Hunter J.L."/>
            <person name="Jenkins J."/>
            <person name="Johnson-Hopson C."/>
            <person name="Khan S."/>
            <person name="Khaykin E."/>
            <person name="Kim C.J."/>
            <person name="Koo H.L."/>
            <person name="Kremenetskaia I."/>
            <person name="Kurtz D.B."/>
            <person name="Kwan A."/>
            <person name="Lam B."/>
            <person name="Langin-Hooper S."/>
            <person name="Lee A."/>
            <person name="Lee J.M."/>
            <person name="Lenz C.A."/>
            <person name="Li J.H."/>
            <person name="Li Y.-P."/>
            <person name="Lin X."/>
            <person name="Liu S.X."/>
            <person name="Liu Z.A."/>
            <person name="Luros J.S."/>
            <person name="Maiti R."/>
            <person name="Marziali A."/>
            <person name="Militscher J."/>
            <person name="Miranda M."/>
            <person name="Nguyen M."/>
            <person name="Nierman W.C."/>
            <person name="Osborne B.I."/>
            <person name="Pai G."/>
            <person name="Peterson J."/>
            <person name="Pham P.K."/>
            <person name="Rizzo M."/>
            <person name="Rooney T."/>
            <person name="Rowley D."/>
            <person name="Sakano H."/>
            <person name="Salzberg S.L."/>
            <person name="Schwartz J.R."/>
            <person name="Shinn P."/>
            <person name="Southwick A.M."/>
            <person name="Sun H."/>
            <person name="Tallon L.J."/>
            <person name="Tambunga G."/>
            <person name="Toriumi M.J."/>
            <person name="Town C.D."/>
            <person name="Utterback T."/>
            <person name="Van Aken S."/>
            <person name="Vaysberg M."/>
            <person name="Vysotskaia V.S."/>
            <person name="Walker M."/>
            <person name="Wu D."/>
            <person name="Yu G."/>
            <person name="Fraser C.M."/>
            <person name="Venter J.C."/>
            <person name="Davis R.W."/>
        </authorList>
    </citation>
    <scope>NUCLEOTIDE SEQUENCE [LARGE SCALE GENOMIC DNA]</scope>
    <source>
        <strain>cv. Columbia</strain>
    </source>
</reference>
<reference key="3">
    <citation type="journal article" date="2017" name="Plant J.">
        <title>Araport11: a complete reannotation of the Arabidopsis thaliana reference genome.</title>
        <authorList>
            <person name="Cheng C.Y."/>
            <person name="Krishnakumar V."/>
            <person name="Chan A.P."/>
            <person name="Thibaud-Nissen F."/>
            <person name="Schobel S."/>
            <person name="Town C.D."/>
        </authorList>
    </citation>
    <scope>GENOME REANNOTATION</scope>
    <source>
        <strain>cv. Columbia</strain>
    </source>
</reference>
<reference key="4">
    <citation type="journal article" date="2003" name="Science">
        <title>Empirical analysis of transcriptional activity in the Arabidopsis genome.</title>
        <authorList>
            <person name="Yamada K."/>
            <person name="Lim J."/>
            <person name="Dale J.M."/>
            <person name="Chen H."/>
            <person name="Shinn P."/>
            <person name="Palm C.J."/>
            <person name="Southwick A.M."/>
            <person name="Wu H.C."/>
            <person name="Kim C.J."/>
            <person name="Nguyen M."/>
            <person name="Pham P.K."/>
            <person name="Cheuk R.F."/>
            <person name="Karlin-Newmann G."/>
            <person name="Liu S.X."/>
            <person name="Lam B."/>
            <person name="Sakano H."/>
            <person name="Wu T."/>
            <person name="Yu G."/>
            <person name="Miranda M."/>
            <person name="Quach H.L."/>
            <person name="Tripp M."/>
            <person name="Chang C.H."/>
            <person name="Lee J.M."/>
            <person name="Toriumi M.J."/>
            <person name="Chan M.M."/>
            <person name="Tang C.C."/>
            <person name="Onodera C.S."/>
            <person name="Deng J.M."/>
            <person name="Akiyama K."/>
            <person name="Ansari Y."/>
            <person name="Arakawa T."/>
            <person name="Banh J."/>
            <person name="Banno F."/>
            <person name="Bowser L."/>
            <person name="Brooks S.Y."/>
            <person name="Carninci P."/>
            <person name="Chao Q."/>
            <person name="Choy N."/>
            <person name="Enju A."/>
            <person name="Goldsmith A.D."/>
            <person name="Gurjal M."/>
            <person name="Hansen N.F."/>
            <person name="Hayashizaki Y."/>
            <person name="Johnson-Hopson C."/>
            <person name="Hsuan V.W."/>
            <person name="Iida K."/>
            <person name="Karnes M."/>
            <person name="Khan S."/>
            <person name="Koesema E."/>
            <person name="Ishida J."/>
            <person name="Jiang P.X."/>
            <person name="Jones T."/>
            <person name="Kawai J."/>
            <person name="Kamiya A."/>
            <person name="Meyers C."/>
            <person name="Nakajima M."/>
            <person name="Narusaka M."/>
            <person name="Seki M."/>
            <person name="Sakurai T."/>
            <person name="Satou M."/>
            <person name="Tamse R."/>
            <person name="Vaysberg M."/>
            <person name="Wallender E.K."/>
            <person name="Wong C."/>
            <person name="Yamamura Y."/>
            <person name="Yuan S."/>
            <person name="Shinozaki K."/>
            <person name="Davis R.W."/>
            <person name="Theologis A."/>
            <person name="Ecker J.R."/>
        </authorList>
    </citation>
    <scope>NUCLEOTIDE SEQUENCE [LARGE SCALE MRNA] (ISOFORM 1)</scope>
    <source>
        <strain>cv. Columbia</strain>
    </source>
</reference>
<reference key="5">
    <citation type="journal article" date="2009" name="DNA Res.">
        <title>Analysis of multiple occurrences of alternative splicing events in Arabidopsis thaliana using novel sequenced full-length cDNAs.</title>
        <authorList>
            <person name="Iida K."/>
            <person name="Fukami-Kobayashi K."/>
            <person name="Toyoda A."/>
            <person name="Sakaki Y."/>
            <person name="Kobayashi M."/>
            <person name="Seki M."/>
            <person name="Shinozaki K."/>
        </authorList>
    </citation>
    <scope>NUCLEOTIDE SEQUENCE [LARGE SCALE MRNA] (ISOFORM 2)</scope>
    <source>
        <strain>cv. Columbia</strain>
    </source>
</reference>
<proteinExistence type="evidence at transcript level"/>
<protein>
    <recommendedName>
        <fullName>Protein LOL1</fullName>
    </recommendedName>
    <alternativeName>
        <fullName>Protein LSD ONE LIKE 1</fullName>
        <shortName>AtLOL1</shortName>
    </alternativeName>
    <alternativeName>
        <fullName>Putative zinc finger LOL1</fullName>
    </alternativeName>
</protein>
<keyword id="KW-0025">Alternative splicing</keyword>
<keyword id="KW-0053">Apoptosis</keyword>
<keyword id="KW-0381">Hypersensitive response</keyword>
<keyword id="KW-0539">Nucleus</keyword>
<keyword id="KW-0611">Plant defense</keyword>
<keyword id="KW-1185">Reference proteome</keyword>
<dbReference type="EMBL" id="AY349618">
    <property type="protein sequence ID" value="AAQ55219.1"/>
    <property type="molecule type" value="mRNA"/>
</dbReference>
<dbReference type="EMBL" id="AC055769">
    <property type="protein sequence ID" value="AAG51243.1"/>
    <property type="status" value="ALT_SEQ"/>
    <property type="molecule type" value="Genomic_DNA"/>
</dbReference>
<dbReference type="EMBL" id="CP002684">
    <property type="protein sequence ID" value="AEE31498.1"/>
    <property type="molecule type" value="Genomic_DNA"/>
</dbReference>
<dbReference type="EMBL" id="CP002684">
    <property type="protein sequence ID" value="AEE31499.1"/>
    <property type="molecule type" value="Genomic_DNA"/>
</dbReference>
<dbReference type="EMBL" id="CP002684">
    <property type="protein sequence ID" value="AEE31500.1"/>
    <property type="molecule type" value="Genomic_DNA"/>
</dbReference>
<dbReference type="EMBL" id="AY057675">
    <property type="protein sequence ID" value="AAL15306.1"/>
    <property type="molecule type" value="mRNA"/>
</dbReference>
<dbReference type="EMBL" id="AY116951">
    <property type="protein sequence ID" value="AAM51585.1"/>
    <property type="molecule type" value="mRNA"/>
</dbReference>
<dbReference type="EMBL" id="BX813858">
    <property type="status" value="NOT_ANNOTATED_CDS"/>
    <property type="molecule type" value="mRNA"/>
</dbReference>
<dbReference type="PIR" id="H86450">
    <property type="entry name" value="H86450"/>
</dbReference>
<dbReference type="RefSeq" id="NP_001117399.1">
    <molecule id="Q93ZB1-1"/>
    <property type="nucleotide sequence ID" value="NM_001123927.2"/>
</dbReference>
<dbReference type="RefSeq" id="NP_001320333.1">
    <property type="nucleotide sequence ID" value="NM_001333008.1"/>
</dbReference>
<dbReference type="RefSeq" id="NP_001320335.1">
    <property type="nucleotide sequence ID" value="NM_001333010.1"/>
</dbReference>
<dbReference type="RefSeq" id="NP_564405.1">
    <molecule id="Q93ZB1-1"/>
    <property type="nucleotide sequence ID" value="NM_102989.3"/>
</dbReference>
<dbReference type="RefSeq" id="NP_849742.2">
    <molecule id="Q93ZB1-2"/>
    <property type="nucleotide sequence ID" value="NM_179411.3"/>
</dbReference>
<dbReference type="BioGRID" id="25382">
    <property type="interactions" value="5"/>
</dbReference>
<dbReference type="FunCoup" id="Q93ZB1">
    <property type="interactions" value="72"/>
</dbReference>
<dbReference type="IntAct" id="Q93ZB1">
    <property type="interactions" value="7"/>
</dbReference>
<dbReference type="STRING" id="3702.Q93ZB1"/>
<dbReference type="GlyGen" id="Q93ZB1">
    <property type="glycosylation" value="1 site"/>
</dbReference>
<dbReference type="PaxDb" id="3702-AT1G32540.1"/>
<dbReference type="ProteomicsDB" id="238462">
    <molecule id="Q93ZB1-1"/>
</dbReference>
<dbReference type="EnsemblPlants" id="AT1G32540.1">
    <molecule id="Q93ZB1-2"/>
    <property type="protein sequence ID" value="AT1G32540.1"/>
    <property type="gene ID" value="AT1G32540"/>
</dbReference>
<dbReference type="EnsemblPlants" id="AT1G32540.2">
    <molecule id="Q93ZB1-1"/>
    <property type="protein sequence ID" value="AT1G32540.2"/>
    <property type="gene ID" value="AT1G32540"/>
</dbReference>
<dbReference type="EnsemblPlants" id="AT1G32540.3">
    <molecule id="Q93ZB1-1"/>
    <property type="protein sequence ID" value="AT1G32540.3"/>
    <property type="gene ID" value="AT1G32540"/>
</dbReference>
<dbReference type="GeneID" id="840148"/>
<dbReference type="Gramene" id="AT1G32540.1">
    <molecule id="Q93ZB1-2"/>
    <property type="protein sequence ID" value="AT1G32540.1"/>
    <property type="gene ID" value="AT1G32540"/>
</dbReference>
<dbReference type="Gramene" id="AT1G32540.2">
    <molecule id="Q93ZB1-1"/>
    <property type="protein sequence ID" value="AT1G32540.2"/>
    <property type="gene ID" value="AT1G32540"/>
</dbReference>
<dbReference type="Gramene" id="AT1G32540.3">
    <molecule id="Q93ZB1-1"/>
    <property type="protein sequence ID" value="AT1G32540.3"/>
    <property type="gene ID" value="AT1G32540"/>
</dbReference>
<dbReference type="KEGG" id="ath:AT1G32540"/>
<dbReference type="Araport" id="AT1G32540"/>
<dbReference type="TAIR" id="AT1G32540">
    <property type="gene designation" value="LOL1"/>
</dbReference>
<dbReference type="eggNOG" id="ENOG502RY0V">
    <property type="taxonomic scope" value="Eukaryota"/>
</dbReference>
<dbReference type="HOGENOM" id="CLU_111765_0_0_1"/>
<dbReference type="InParanoid" id="Q93ZB1"/>
<dbReference type="OrthoDB" id="5594417at2759"/>
<dbReference type="PhylomeDB" id="Q93ZB1"/>
<dbReference type="PRO" id="PR:Q93ZB1"/>
<dbReference type="Proteomes" id="UP000006548">
    <property type="component" value="Chromosome 1"/>
</dbReference>
<dbReference type="ExpressionAtlas" id="Q93ZB1">
    <property type="expression patterns" value="baseline and differential"/>
</dbReference>
<dbReference type="GO" id="GO:0005634">
    <property type="term" value="C:nucleus"/>
    <property type="evidence" value="ECO:0007669"/>
    <property type="project" value="UniProtKB-SubCell"/>
</dbReference>
<dbReference type="GO" id="GO:0003677">
    <property type="term" value="F:DNA binding"/>
    <property type="evidence" value="ECO:0000250"/>
    <property type="project" value="TAIR"/>
</dbReference>
<dbReference type="GO" id="GO:0098542">
    <property type="term" value="P:defense response to other organism"/>
    <property type="evidence" value="ECO:0000315"/>
    <property type="project" value="UniProtKB"/>
</dbReference>
<dbReference type="GO" id="GO:0009626">
    <property type="term" value="P:plant-type hypersensitive response"/>
    <property type="evidence" value="ECO:0007669"/>
    <property type="project" value="UniProtKB-KW"/>
</dbReference>
<dbReference type="GO" id="GO:0034052">
    <property type="term" value="P:positive regulation of plant-type hypersensitive response"/>
    <property type="evidence" value="ECO:0000315"/>
    <property type="project" value="UniProtKB"/>
</dbReference>
<dbReference type="GO" id="GO:0043068">
    <property type="term" value="P:positive regulation of programmed cell death"/>
    <property type="evidence" value="ECO:0000315"/>
    <property type="project" value="TAIR"/>
</dbReference>
<dbReference type="GO" id="GO:2000121">
    <property type="term" value="P:regulation of removal of superoxide radicals"/>
    <property type="evidence" value="ECO:0000315"/>
    <property type="project" value="UniProtKB"/>
</dbReference>
<dbReference type="InterPro" id="IPR040319">
    <property type="entry name" value="LSD1-like"/>
</dbReference>
<dbReference type="InterPro" id="IPR005735">
    <property type="entry name" value="Znf_LSD1"/>
</dbReference>
<dbReference type="NCBIfam" id="TIGR01053">
    <property type="entry name" value="LSD1"/>
    <property type="match status" value="3"/>
</dbReference>
<dbReference type="PANTHER" id="PTHR31747:SF1">
    <property type="entry name" value="PROTEIN LOL1"/>
    <property type="match status" value="1"/>
</dbReference>
<dbReference type="PANTHER" id="PTHR31747">
    <property type="entry name" value="PROTEIN LSD1"/>
    <property type="match status" value="1"/>
</dbReference>
<dbReference type="Pfam" id="PF06943">
    <property type="entry name" value="zf-LSD1"/>
    <property type="match status" value="3"/>
</dbReference>
<name>LOL1_ARATH</name>
<sequence>MPVPLAPYPTPPAPALAPSYNTPPANGSTSGQSQLVCSGCRNLLMYPVGATSVCCAVCNAVTAVPPPGTEMAQLVCGGCHTLLMYIRGATSVQCSCCHTVNLALEANQVAHVNCGNCMMLLMYQYGARSVKCAVCNFVTSVGGSTSTTDSKFNN</sequence>